<sequence>MAGHSKWKNIQHRKGRQDAKKSKAFTKVAKEIIIAAKGGGDPVANSRLRAAIAAAKAVNLPKDKIETAIKKGTGELAGGDIFELVYEGYGPGGIAFLIEVATDNKNRTVAEVRHILTKSGGSMGEAGCVGWMFDKKGVLTFPKEAYSEDQLMEIGLEAGCDDVIDEGDSWAVHVDPSSFEDVKAAFEQAGVTAESVELASVPQNTIEVDAETGKKLLRLVDALEENDDVQNVFANFDLPDEVLAEMED</sequence>
<dbReference type="EMBL" id="CP000112">
    <property type="protein sequence ID" value="ABB39122.1"/>
    <property type="molecule type" value="Genomic_DNA"/>
</dbReference>
<dbReference type="RefSeq" id="WP_011368202.1">
    <property type="nucleotide sequence ID" value="NC_007519.1"/>
</dbReference>
<dbReference type="SMR" id="Q30YX4"/>
<dbReference type="STRING" id="207559.Dde_2325"/>
<dbReference type="KEGG" id="dde:Dde_2325"/>
<dbReference type="eggNOG" id="COG0217">
    <property type="taxonomic scope" value="Bacteria"/>
</dbReference>
<dbReference type="HOGENOM" id="CLU_062974_2_2_7"/>
<dbReference type="Proteomes" id="UP000002710">
    <property type="component" value="Chromosome"/>
</dbReference>
<dbReference type="GO" id="GO:0005829">
    <property type="term" value="C:cytosol"/>
    <property type="evidence" value="ECO:0007669"/>
    <property type="project" value="TreeGrafter"/>
</dbReference>
<dbReference type="GO" id="GO:0003677">
    <property type="term" value="F:DNA binding"/>
    <property type="evidence" value="ECO:0007669"/>
    <property type="project" value="UniProtKB-UniRule"/>
</dbReference>
<dbReference type="GO" id="GO:0006355">
    <property type="term" value="P:regulation of DNA-templated transcription"/>
    <property type="evidence" value="ECO:0007669"/>
    <property type="project" value="UniProtKB-UniRule"/>
</dbReference>
<dbReference type="FunFam" id="1.10.10.200:FF:000002">
    <property type="entry name" value="Probable transcriptional regulatory protein CLM62_37755"/>
    <property type="match status" value="1"/>
</dbReference>
<dbReference type="Gene3D" id="1.10.10.200">
    <property type="match status" value="1"/>
</dbReference>
<dbReference type="Gene3D" id="3.30.70.980">
    <property type="match status" value="2"/>
</dbReference>
<dbReference type="HAMAP" id="MF_00693">
    <property type="entry name" value="Transcrip_reg_TACO1"/>
    <property type="match status" value="1"/>
</dbReference>
<dbReference type="InterPro" id="IPR017856">
    <property type="entry name" value="Integrase-like_N"/>
</dbReference>
<dbReference type="InterPro" id="IPR048300">
    <property type="entry name" value="TACO1_YebC-like_2nd/3rd_dom"/>
</dbReference>
<dbReference type="InterPro" id="IPR049083">
    <property type="entry name" value="TACO1_YebC_N"/>
</dbReference>
<dbReference type="InterPro" id="IPR002876">
    <property type="entry name" value="Transcrip_reg_TACO1-like"/>
</dbReference>
<dbReference type="InterPro" id="IPR026564">
    <property type="entry name" value="Transcrip_reg_TACO1-like_dom3"/>
</dbReference>
<dbReference type="InterPro" id="IPR029072">
    <property type="entry name" value="YebC-like"/>
</dbReference>
<dbReference type="NCBIfam" id="NF001030">
    <property type="entry name" value="PRK00110.1"/>
    <property type="match status" value="1"/>
</dbReference>
<dbReference type="NCBIfam" id="NF009044">
    <property type="entry name" value="PRK12378.1"/>
    <property type="match status" value="1"/>
</dbReference>
<dbReference type="NCBIfam" id="TIGR01033">
    <property type="entry name" value="YebC/PmpR family DNA-binding transcriptional regulator"/>
    <property type="match status" value="1"/>
</dbReference>
<dbReference type="PANTHER" id="PTHR12532:SF6">
    <property type="entry name" value="TRANSCRIPTIONAL REGULATORY PROTEIN YEBC-RELATED"/>
    <property type="match status" value="1"/>
</dbReference>
<dbReference type="PANTHER" id="PTHR12532">
    <property type="entry name" value="TRANSLATIONAL ACTIVATOR OF CYTOCHROME C OXIDASE 1"/>
    <property type="match status" value="1"/>
</dbReference>
<dbReference type="Pfam" id="PF20772">
    <property type="entry name" value="TACO1_YebC_N"/>
    <property type="match status" value="1"/>
</dbReference>
<dbReference type="Pfam" id="PF01709">
    <property type="entry name" value="Transcrip_reg"/>
    <property type="match status" value="1"/>
</dbReference>
<dbReference type="SUPFAM" id="SSF75625">
    <property type="entry name" value="YebC-like"/>
    <property type="match status" value="1"/>
</dbReference>
<organism>
    <name type="scientific">Oleidesulfovibrio alaskensis (strain ATCC BAA-1058 / DSM 17464 / G20)</name>
    <name type="common">Desulfovibrio alaskensis</name>
    <dbReference type="NCBI Taxonomy" id="207559"/>
    <lineage>
        <taxon>Bacteria</taxon>
        <taxon>Pseudomonadati</taxon>
        <taxon>Thermodesulfobacteriota</taxon>
        <taxon>Desulfovibrionia</taxon>
        <taxon>Desulfovibrionales</taxon>
        <taxon>Desulfovibrionaceae</taxon>
        <taxon>Oleidesulfovibrio</taxon>
    </lineage>
</organism>
<comment type="subcellular location">
    <subcellularLocation>
        <location evidence="1">Cytoplasm</location>
    </subcellularLocation>
</comment>
<comment type="similarity">
    <text evidence="1">Belongs to the TACO1 family.</text>
</comment>
<protein>
    <recommendedName>
        <fullName evidence="1">Probable transcriptional regulatory protein Dde_2325</fullName>
    </recommendedName>
</protein>
<keyword id="KW-0963">Cytoplasm</keyword>
<keyword id="KW-0238">DNA-binding</keyword>
<keyword id="KW-1185">Reference proteome</keyword>
<keyword id="KW-0804">Transcription</keyword>
<keyword id="KW-0805">Transcription regulation</keyword>
<accession>Q30YX4</accession>
<gene>
    <name type="ordered locus">Dde_2325</name>
</gene>
<evidence type="ECO:0000255" key="1">
    <source>
        <dbReference type="HAMAP-Rule" id="MF_00693"/>
    </source>
</evidence>
<evidence type="ECO:0000256" key="2">
    <source>
        <dbReference type="SAM" id="MobiDB-lite"/>
    </source>
</evidence>
<proteinExistence type="inferred from homology"/>
<name>Y2325_OLEA2</name>
<feature type="chain" id="PRO_0000257059" description="Probable transcriptional regulatory protein Dde_2325">
    <location>
        <begin position="1"/>
        <end position="248"/>
    </location>
</feature>
<feature type="region of interest" description="Disordered" evidence="2">
    <location>
        <begin position="1"/>
        <end position="22"/>
    </location>
</feature>
<feature type="compositionally biased region" description="Basic residues" evidence="2">
    <location>
        <begin position="1"/>
        <end position="15"/>
    </location>
</feature>
<reference key="1">
    <citation type="journal article" date="2011" name="J. Bacteriol.">
        <title>Complete genome sequence and updated annotation of Desulfovibrio alaskensis G20.</title>
        <authorList>
            <person name="Hauser L.J."/>
            <person name="Land M.L."/>
            <person name="Brown S.D."/>
            <person name="Larimer F."/>
            <person name="Keller K.L."/>
            <person name="Rapp-Giles B.J."/>
            <person name="Price M.N."/>
            <person name="Lin M."/>
            <person name="Bruce D.C."/>
            <person name="Detter J.C."/>
            <person name="Tapia R."/>
            <person name="Han C.S."/>
            <person name="Goodwin L.A."/>
            <person name="Cheng J.F."/>
            <person name="Pitluck S."/>
            <person name="Copeland A."/>
            <person name="Lucas S."/>
            <person name="Nolan M."/>
            <person name="Lapidus A.L."/>
            <person name="Palumbo A.V."/>
            <person name="Wall J.D."/>
        </authorList>
    </citation>
    <scope>NUCLEOTIDE SEQUENCE [LARGE SCALE GENOMIC DNA]</scope>
    <source>
        <strain>ATCC BAA-1058 / DSM 17464 / G20</strain>
    </source>
</reference>